<feature type="chain" id="PRO_0000109001" description="UDP-N-acetylmuramoylalanine--D-glutamate ligase">
    <location>
        <begin position="1"/>
        <end position="458"/>
    </location>
</feature>
<feature type="binding site" evidence="1">
    <location>
        <begin position="124"/>
        <end position="130"/>
    </location>
    <ligand>
        <name>ATP</name>
        <dbReference type="ChEBI" id="CHEBI:30616"/>
    </ligand>
</feature>
<organism>
    <name type="scientific">Clostridium tetani (strain Massachusetts / E88)</name>
    <dbReference type="NCBI Taxonomy" id="212717"/>
    <lineage>
        <taxon>Bacteria</taxon>
        <taxon>Bacillati</taxon>
        <taxon>Bacillota</taxon>
        <taxon>Clostridia</taxon>
        <taxon>Eubacteriales</taxon>
        <taxon>Clostridiaceae</taxon>
        <taxon>Clostridium</taxon>
    </lineage>
</organism>
<comment type="function">
    <text evidence="1">Cell wall formation. Catalyzes the addition of glutamate to the nucleotide precursor UDP-N-acetylmuramoyl-L-alanine (UMA).</text>
</comment>
<comment type="catalytic activity">
    <reaction evidence="1">
        <text>UDP-N-acetyl-alpha-D-muramoyl-L-alanine + D-glutamate + ATP = UDP-N-acetyl-alpha-D-muramoyl-L-alanyl-D-glutamate + ADP + phosphate + H(+)</text>
        <dbReference type="Rhea" id="RHEA:16429"/>
        <dbReference type="ChEBI" id="CHEBI:15378"/>
        <dbReference type="ChEBI" id="CHEBI:29986"/>
        <dbReference type="ChEBI" id="CHEBI:30616"/>
        <dbReference type="ChEBI" id="CHEBI:43474"/>
        <dbReference type="ChEBI" id="CHEBI:83898"/>
        <dbReference type="ChEBI" id="CHEBI:83900"/>
        <dbReference type="ChEBI" id="CHEBI:456216"/>
        <dbReference type="EC" id="6.3.2.9"/>
    </reaction>
</comment>
<comment type="pathway">
    <text evidence="1">Cell wall biogenesis; peptidoglycan biosynthesis.</text>
</comment>
<comment type="subcellular location">
    <subcellularLocation>
        <location evidence="1">Cytoplasm</location>
    </subcellularLocation>
</comment>
<comment type="similarity">
    <text evidence="1">Belongs to the MurCDEF family.</text>
</comment>
<comment type="sequence caution" evidence="2">
    <conflict type="erroneous initiation">
        <sequence resource="EMBL-CDS" id="AAO34861"/>
    </conflict>
</comment>
<reference key="1">
    <citation type="journal article" date="2003" name="Proc. Natl. Acad. Sci. U.S.A.">
        <title>The genome sequence of Clostridium tetani, the causative agent of tetanus disease.</title>
        <authorList>
            <person name="Brueggemann H."/>
            <person name="Baeumer S."/>
            <person name="Fricke W.F."/>
            <person name="Wiezer A."/>
            <person name="Liesegang H."/>
            <person name="Decker I."/>
            <person name="Herzberg C."/>
            <person name="Martinez-Arias R."/>
            <person name="Merkl R."/>
            <person name="Henne A."/>
            <person name="Gottschalk G."/>
        </authorList>
    </citation>
    <scope>NUCLEOTIDE SEQUENCE [LARGE SCALE GENOMIC DNA]</scope>
    <source>
        <strain>Massachusetts / E88</strain>
    </source>
</reference>
<proteinExistence type="inferred from homology"/>
<sequence>MNKDFNEFKKFIYNKKVAIIGLGISNMPLVEFLSNLGARVTGFDKKNENELENNINELKAKGVNFELGENYLDKLSNFDVVFRTPSMRTDHPILIKAKSEGAYITSEMEEFIKYCPAKLFCITGSDGKTTTTTLIYNILKTEGYTVWVGGNIGNPLFTKIEEIKKDDKVVLELSSFQLMSIKEPIEVALVTNVSPNHLDIHKDMEEYIKAKKNIFKYQRENDLLVINEDNKITKSMEEECRGRLLKFSMKEKLKEGSFYYNEDLYINEKKVCNVSEVKLKGMHNVENLLAAFSCVSEDSSIDSMREVAKNFNGVEHRLEFVKEIQEVKYFNDSIASSPTRTLAALQSFDRPVILIAGGYDKKISFEVLAKEGISHIKHLILLGDTKYKIEEAFKKVMRDSSEDLPISICNSIEEAINIAKENGESGDVVTLSPACASFDMFKNFEERGNKFKSIIRNL</sequence>
<name>MURD_CLOTE</name>
<evidence type="ECO:0000255" key="1">
    <source>
        <dbReference type="HAMAP-Rule" id="MF_00639"/>
    </source>
</evidence>
<evidence type="ECO:0000305" key="2"/>
<gene>
    <name evidence="1" type="primary">murD</name>
    <name type="ordered locus">CTC_00213</name>
</gene>
<dbReference type="EC" id="6.3.2.9" evidence="1"/>
<dbReference type="EMBL" id="AE015927">
    <property type="protein sequence ID" value="AAO34861.1"/>
    <property type="status" value="ALT_INIT"/>
    <property type="molecule type" value="Genomic_DNA"/>
</dbReference>
<dbReference type="RefSeq" id="WP_035110621.1">
    <property type="nucleotide sequence ID" value="NC_004557.1"/>
</dbReference>
<dbReference type="SMR" id="Q899G5"/>
<dbReference type="STRING" id="212717.CTC_00213"/>
<dbReference type="GeneID" id="24255026"/>
<dbReference type="KEGG" id="ctc:CTC_00213"/>
<dbReference type="HOGENOM" id="CLU_032540_0_1_9"/>
<dbReference type="OrthoDB" id="9809796at2"/>
<dbReference type="UniPathway" id="UPA00219"/>
<dbReference type="Proteomes" id="UP000001412">
    <property type="component" value="Chromosome"/>
</dbReference>
<dbReference type="GO" id="GO:0005737">
    <property type="term" value="C:cytoplasm"/>
    <property type="evidence" value="ECO:0007669"/>
    <property type="project" value="UniProtKB-SubCell"/>
</dbReference>
<dbReference type="GO" id="GO:0005524">
    <property type="term" value="F:ATP binding"/>
    <property type="evidence" value="ECO:0007669"/>
    <property type="project" value="UniProtKB-UniRule"/>
</dbReference>
<dbReference type="GO" id="GO:0008764">
    <property type="term" value="F:UDP-N-acetylmuramoylalanine-D-glutamate ligase activity"/>
    <property type="evidence" value="ECO:0007669"/>
    <property type="project" value="UniProtKB-UniRule"/>
</dbReference>
<dbReference type="GO" id="GO:0051301">
    <property type="term" value="P:cell division"/>
    <property type="evidence" value="ECO:0007669"/>
    <property type="project" value="UniProtKB-KW"/>
</dbReference>
<dbReference type="GO" id="GO:0071555">
    <property type="term" value="P:cell wall organization"/>
    <property type="evidence" value="ECO:0007669"/>
    <property type="project" value="UniProtKB-KW"/>
</dbReference>
<dbReference type="GO" id="GO:0009252">
    <property type="term" value="P:peptidoglycan biosynthetic process"/>
    <property type="evidence" value="ECO:0007669"/>
    <property type="project" value="UniProtKB-UniRule"/>
</dbReference>
<dbReference type="GO" id="GO:0008360">
    <property type="term" value="P:regulation of cell shape"/>
    <property type="evidence" value="ECO:0007669"/>
    <property type="project" value="UniProtKB-KW"/>
</dbReference>
<dbReference type="Gene3D" id="3.90.190.20">
    <property type="entry name" value="Mur ligase, C-terminal domain"/>
    <property type="match status" value="1"/>
</dbReference>
<dbReference type="Gene3D" id="3.40.1190.10">
    <property type="entry name" value="Mur-like, catalytic domain"/>
    <property type="match status" value="1"/>
</dbReference>
<dbReference type="Gene3D" id="3.40.50.720">
    <property type="entry name" value="NAD(P)-binding Rossmann-like Domain"/>
    <property type="match status" value="1"/>
</dbReference>
<dbReference type="HAMAP" id="MF_00639">
    <property type="entry name" value="MurD"/>
    <property type="match status" value="1"/>
</dbReference>
<dbReference type="InterPro" id="IPR036565">
    <property type="entry name" value="Mur-like_cat_sf"/>
</dbReference>
<dbReference type="InterPro" id="IPR004101">
    <property type="entry name" value="Mur_ligase_C"/>
</dbReference>
<dbReference type="InterPro" id="IPR036615">
    <property type="entry name" value="Mur_ligase_C_dom_sf"/>
</dbReference>
<dbReference type="InterPro" id="IPR013221">
    <property type="entry name" value="Mur_ligase_cen"/>
</dbReference>
<dbReference type="InterPro" id="IPR005762">
    <property type="entry name" value="MurD"/>
</dbReference>
<dbReference type="NCBIfam" id="TIGR01087">
    <property type="entry name" value="murD"/>
    <property type="match status" value="1"/>
</dbReference>
<dbReference type="PANTHER" id="PTHR43692">
    <property type="entry name" value="UDP-N-ACETYLMURAMOYLALANINE--D-GLUTAMATE LIGASE"/>
    <property type="match status" value="1"/>
</dbReference>
<dbReference type="PANTHER" id="PTHR43692:SF1">
    <property type="entry name" value="UDP-N-ACETYLMURAMOYLALANINE--D-GLUTAMATE LIGASE"/>
    <property type="match status" value="1"/>
</dbReference>
<dbReference type="Pfam" id="PF02875">
    <property type="entry name" value="Mur_ligase_C"/>
    <property type="match status" value="1"/>
</dbReference>
<dbReference type="Pfam" id="PF08245">
    <property type="entry name" value="Mur_ligase_M"/>
    <property type="match status" value="1"/>
</dbReference>
<dbReference type="Pfam" id="PF21799">
    <property type="entry name" value="MurD-like_N"/>
    <property type="match status" value="1"/>
</dbReference>
<dbReference type="SUPFAM" id="SSF51984">
    <property type="entry name" value="MurCD N-terminal domain"/>
    <property type="match status" value="1"/>
</dbReference>
<dbReference type="SUPFAM" id="SSF53623">
    <property type="entry name" value="MurD-like peptide ligases, catalytic domain"/>
    <property type="match status" value="1"/>
</dbReference>
<dbReference type="SUPFAM" id="SSF53244">
    <property type="entry name" value="MurD-like peptide ligases, peptide-binding domain"/>
    <property type="match status" value="1"/>
</dbReference>
<keyword id="KW-0067">ATP-binding</keyword>
<keyword id="KW-0131">Cell cycle</keyword>
<keyword id="KW-0132">Cell division</keyword>
<keyword id="KW-0133">Cell shape</keyword>
<keyword id="KW-0961">Cell wall biogenesis/degradation</keyword>
<keyword id="KW-0963">Cytoplasm</keyword>
<keyword id="KW-0436">Ligase</keyword>
<keyword id="KW-0547">Nucleotide-binding</keyword>
<keyword id="KW-0573">Peptidoglycan synthesis</keyword>
<keyword id="KW-1185">Reference proteome</keyword>
<accession>Q899G5</accession>
<protein>
    <recommendedName>
        <fullName evidence="1">UDP-N-acetylmuramoylalanine--D-glutamate ligase</fullName>
        <ecNumber evidence="1">6.3.2.9</ecNumber>
    </recommendedName>
    <alternativeName>
        <fullName evidence="1">D-glutamic acid-adding enzyme</fullName>
    </alternativeName>
    <alternativeName>
        <fullName evidence="1">UDP-N-acetylmuramoyl-L-alanyl-D-glutamate synthetase</fullName>
    </alternativeName>
</protein>